<proteinExistence type="evidence at protein level"/>
<sequence length="166" mass="17755">MVVAGIDPGITHLGLGVVAVEGKGALKARLLHGEVVKTSPQEPAKERVGRIHARVLEVLHRFRPEAVAVEEQFFYRQNELAYKVGWALGAVLVAAFEAGVPVYAYGPMQVKQALAGHGHAAKEEVALMVRGILGLKEAPRPSHLADALAIALTHAFYARMGTAKPL</sequence>
<accession>Q5SJC4</accession>
<organism>
    <name type="scientific">Thermus thermophilus (strain ATCC 27634 / DSM 579 / HB8)</name>
    <dbReference type="NCBI Taxonomy" id="300852"/>
    <lineage>
        <taxon>Bacteria</taxon>
        <taxon>Thermotogati</taxon>
        <taxon>Deinococcota</taxon>
        <taxon>Deinococci</taxon>
        <taxon>Thermales</taxon>
        <taxon>Thermaceae</taxon>
        <taxon>Thermus</taxon>
    </lineage>
</organism>
<reference key="1">
    <citation type="submission" date="2004-11" db="EMBL/GenBank/DDBJ databases">
        <title>Complete genome sequence of Thermus thermophilus HB8.</title>
        <authorList>
            <person name="Masui R."/>
            <person name="Kurokawa K."/>
            <person name="Nakagawa N."/>
            <person name="Tokunaga F."/>
            <person name="Koyama Y."/>
            <person name="Shibata T."/>
            <person name="Oshima T."/>
            <person name="Yokoyama S."/>
            <person name="Yasunaga T."/>
            <person name="Kuramitsu S."/>
        </authorList>
    </citation>
    <scope>NUCLEOTIDE SEQUENCE [LARGE SCALE GENOMIC DNA]</scope>
    <source>
        <strain>ATCC 27634 / DSM 579 / HB8</strain>
    </source>
</reference>
<reference evidence="12 13" key="2">
    <citation type="journal article" date="2013" name="Nucleic Acids Res.">
        <title>Structural asymmetry in the Thermus thermophilus RuvC dimer suggests a basis for sequential strand cleavages during Holliday junction resolution.</title>
        <authorList>
            <person name="Chen L."/>
            <person name="Shi K."/>
            <person name="Yin Z."/>
            <person name="Aihara H."/>
        </authorList>
    </citation>
    <scope>X-RAY CRYSTALLOGRAPHY (1.28 ANGSTROMS) IN COMPLEX WITH MG(2+)</scope>
    <scope>FUNCTION</scope>
    <scope>CATALYTIC ACTIVITY</scope>
    <scope>PROBABLE ACTIVE SITE</scope>
    <scope>COFACTOR</scope>
    <scope>BIOPHYSICOCHEMICAL PROPERTIES</scope>
    <scope>SUBUNIT</scope>
    <scope>MUTAGENESIS OF PHE-73; PHE-74; TYR-75 AND ASP-146</scope>
    <source>
        <strain>ATCC 27634 / DSM 579 / HB8</strain>
    </source>
</reference>
<reference evidence="14" key="3">
    <citation type="journal article" date="2013" name="Nucleic Acids Res.">
        <title>Crystal structure of RuvC resolvase in complex with Holliday junction substrate.</title>
        <authorList>
            <person name="Gorecka K.M."/>
            <person name="Komorowska W."/>
            <person name="Nowotny M."/>
        </authorList>
    </citation>
    <scope>X-RAY CRYSTALLOGRAPHY (3.75 ANGSTROMS) IN COMPLEX WITH DNA</scope>
    <scope>FUNCTION</scope>
    <scope>CATALYTIC ACTIVITY</scope>
    <scope>PROBABLE ACTIVE SITE</scope>
    <scope>SUBUNIT</scope>
    <scope>DNA-BINDING</scope>
    <scope>MUTAGENESIS OF GLU-70; TYR-75; ARG-76 AND HIS-143</scope>
</reference>
<reference evidence="15" key="4">
    <citation type="journal article" date="2019" name="Nat. Commun.">
        <title>RuvC uses dynamic probing of the Holliday junction to achieve sequence specificity and efficient resolution.</title>
        <authorList>
            <person name="Gorecka K.M."/>
            <person name="Krepl M."/>
            <person name="Szlachcic A."/>
            <person name="Poznanski J."/>
            <person name="Sponer J."/>
            <person name="Nowotny M."/>
        </authorList>
    </citation>
    <scope>X-RAY CRYSTALLOGRAPHY (3.41 ANGSTROMS) IN COMPLEX WITH DNA</scope>
    <scope>FUNCTION</scope>
    <scope>DNA CLEAVAGE SITE</scope>
    <scope>CATALYTIC ACTIVITY</scope>
    <scope>PROBABLE ACTIVE SITE</scope>
    <scope>WEDGE MOTIF</scope>
    <scope>MUTAGENESIS OF ARG-76</scope>
</reference>
<gene>
    <name evidence="1 5" type="primary">ruvC</name>
    <name type="ordered locus">TTHA1090</name>
</gene>
<keyword id="KW-0002">3D-structure</keyword>
<keyword id="KW-0963">Cytoplasm</keyword>
<keyword id="KW-0227">DNA damage</keyword>
<keyword id="KW-0233">DNA recombination</keyword>
<keyword id="KW-0234">DNA repair</keyword>
<keyword id="KW-0238">DNA-binding</keyword>
<keyword id="KW-0255">Endonuclease</keyword>
<keyword id="KW-0378">Hydrolase</keyword>
<keyword id="KW-0460">Magnesium</keyword>
<keyword id="KW-0479">Metal-binding</keyword>
<keyword id="KW-0540">Nuclease</keyword>
<keyword id="KW-1185">Reference proteome</keyword>
<dbReference type="EC" id="3.1.21.10" evidence="1 2 3"/>
<dbReference type="EMBL" id="AP008226">
    <property type="protein sequence ID" value="BAD70913.1"/>
    <property type="molecule type" value="Genomic_DNA"/>
</dbReference>
<dbReference type="RefSeq" id="WP_011173164.1">
    <property type="nucleotide sequence ID" value="NC_006461.1"/>
</dbReference>
<dbReference type="RefSeq" id="YP_144356.1">
    <property type="nucleotide sequence ID" value="NC_006461.1"/>
</dbReference>
<dbReference type="PDB" id="4EP4">
    <property type="method" value="X-ray"/>
    <property type="resolution" value="1.28 A"/>
    <property type="chains" value="A/B=1-166"/>
</dbReference>
<dbReference type="PDB" id="4EP5">
    <property type="method" value="X-ray"/>
    <property type="resolution" value="2.08 A"/>
    <property type="chains" value="A=1-166"/>
</dbReference>
<dbReference type="PDB" id="4LD0">
    <property type="method" value="X-ray"/>
    <property type="resolution" value="3.75 A"/>
    <property type="chains" value="A/B=1-166"/>
</dbReference>
<dbReference type="PDB" id="6S16">
    <property type="method" value="X-ray"/>
    <property type="resolution" value="3.41 A"/>
    <property type="chains" value="A/B=1-166"/>
</dbReference>
<dbReference type="PDBsum" id="4EP4"/>
<dbReference type="PDBsum" id="4EP5"/>
<dbReference type="PDBsum" id="4LD0"/>
<dbReference type="PDBsum" id="6S16"/>
<dbReference type="SMR" id="Q5SJC4"/>
<dbReference type="EnsemblBacteria" id="BAD70913">
    <property type="protein sequence ID" value="BAD70913"/>
    <property type="gene ID" value="BAD70913"/>
</dbReference>
<dbReference type="GeneID" id="3168165"/>
<dbReference type="KEGG" id="ttj:TTHA1090"/>
<dbReference type="PATRIC" id="fig|300852.9.peg.1070"/>
<dbReference type="eggNOG" id="COG0817">
    <property type="taxonomic scope" value="Bacteria"/>
</dbReference>
<dbReference type="HOGENOM" id="CLU_091257_3_1_0"/>
<dbReference type="PhylomeDB" id="Q5SJC4"/>
<dbReference type="BRENDA" id="3.1.21.10">
    <property type="organism ID" value="2305"/>
</dbReference>
<dbReference type="EvolutionaryTrace" id="Q5SJC4"/>
<dbReference type="Proteomes" id="UP000000532">
    <property type="component" value="Chromosome"/>
</dbReference>
<dbReference type="GO" id="GO:0005737">
    <property type="term" value="C:cytoplasm"/>
    <property type="evidence" value="ECO:0007669"/>
    <property type="project" value="UniProtKB-SubCell"/>
</dbReference>
<dbReference type="GO" id="GO:0048476">
    <property type="term" value="C:Holliday junction resolvase complex"/>
    <property type="evidence" value="ECO:0007669"/>
    <property type="project" value="UniProtKB-UniRule"/>
</dbReference>
<dbReference type="GO" id="GO:0008821">
    <property type="term" value="F:crossover junction DNA endonuclease activity"/>
    <property type="evidence" value="ECO:0007669"/>
    <property type="project" value="UniProtKB-UniRule"/>
</dbReference>
<dbReference type="GO" id="GO:0003677">
    <property type="term" value="F:DNA binding"/>
    <property type="evidence" value="ECO:0007669"/>
    <property type="project" value="UniProtKB-KW"/>
</dbReference>
<dbReference type="GO" id="GO:0000287">
    <property type="term" value="F:magnesium ion binding"/>
    <property type="evidence" value="ECO:0007669"/>
    <property type="project" value="UniProtKB-UniRule"/>
</dbReference>
<dbReference type="GO" id="GO:0006310">
    <property type="term" value="P:DNA recombination"/>
    <property type="evidence" value="ECO:0007669"/>
    <property type="project" value="UniProtKB-UniRule"/>
</dbReference>
<dbReference type="GO" id="GO:0006281">
    <property type="term" value="P:DNA repair"/>
    <property type="evidence" value="ECO:0007669"/>
    <property type="project" value="UniProtKB-UniRule"/>
</dbReference>
<dbReference type="CDD" id="cd16962">
    <property type="entry name" value="RuvC"/>
    <property type="match status" value="1"/>
</dbReference>
<dbReference type="FunFam" id="3.30.420.10:FF:000002">
    <property type="entry name" value="Crossover junction endodeoxyribonuclease RuvC"/>
    <property type="match status" value="1"/>
</dbReference>
<dbReference type="Gene3D" id="3.30.420.10">
    <property type="entry name" value="Ribonuclease H-like superfamily/Ribonuclease H"/>
    <property type="match status" value="1"/>
</dbReference>
<dbReference type="HAMAP" id="MF_00034">
    <property type="entry name" value="RuvC"/>
    <property type="match status" value="1"/>
</dbReference>
<dbReference type="InterPro" id="IPR012337">
    <property type="entry name" value="RNaseH-like_sf"/>
</dbReference>
<dbReference type="InterPro" id="IPR036397">
    <property type="entry name" value="RNaseH_sf"/>
</dbReference>
<dbReference type="InterPro" id="IPR002176">
    <property type="entry name" value="X-over_junc_endoDNase_RuvC"/>
</dbReference>
<dbReference type="NCBIfam" id="TIGR00228">
    <property type="entry name" value="ruvC"/>
    <property type="match status" value="1"/>
</dbReference>
<dbReference type="PANTHER" id="PTHR30194">
    <property type="entry name" value="CROSSOVER JUNCTION ENDODEOXYRIBONUCLEASE RUVC"/>
    <property type="match status" value="1"/>
</dbReference>
<dbReference type="PANTHER" id="PTHR30194:SF3">
    <property type="entry name" value="CROSSOVER JUNCTION ENDODEOXYRIBONUCLEASE RUVC"/>
    <property type="match status" value="1"/>
</dbReference>
<dbReference type="Pfam" id="PF02075">
    <property type="entry name" value="RuvC"/>
    <property type="match status" value="1"/>
</dbReference>
<dbReference type="PRINTS" id="PR00696">
    <property type="entry name" value="RSOLVASERUVC"/>
</dbReference>
<dbReference type="SUPFAM" id="SSF53098">
    <property type="entry name" value="Ribonuclease H-like"/>
    <property type="match status" value="1"/>
</dbReference>
<name>RUVC_THET8</name>
<protein>
    <recommendedName>
        <fullName evidence="1">Crossover junction endodeoxyribonuclease RuvC</fullName>
        <ecNumber evidence="1 2 3">3.1.21.10</ecNumber>
    </recommendedName>
    <alternativeName>
        <fullName evidence="1">Holliday junction nuclease RuvC</fullName>
    </alternativeName>
    <alternativeName>
        <fullName evidence="1">Holliday junction resolvase RuvC</fullName>
    </alternativeName>
</protein>
<evidence type="ECO:0000255" key="1">
    <source>
        <dbReference type="HAMAP-Rule" id="MF_00034"/>
    </source>
</evidence>
<evidence type="ECO:0000269" key="2">
    <source>
    </source>
</evidence>
<evidence type="ECO:0000269" key="3">
    <source>
    </source>
</evidence>
<evidence type="ECO:0000269" key="4">
    <source>
    </source>
</evidence>
<evidence type="ECO:0000303" key="5">
    <source ref="1"/>
</evidence>
<evidence type="ECO:0000305" key="6">
    <source>
    </source>
</evidence>
<evidence type="ECO:0000305" key="7">
    <source>
    </source>
</evidence>
<evidence type="ECO:0000305" key="8">
    <source>
    </source>
</evidence>
<evidence type="ECO:0000312" key="9">
    <source>
        <dbReference type="PDB" id="4EP4"/>
    </source>
</evidence>
<evidence type="ECO:0000312" key="10">
    <source>
        <dbReference type="PDB" id="4LD0"/>
    </source>
</evidence>
<evidence type="ECO:0000312" key="11">
    <source>
        <dbReference type="PDB" id="6S16"/>
    </source>
</evidence>
<evidence type="ECO:0007744" key="12">
    <source>
        <dbReference type="PDB" id="4EP4"/>
    </source>
</evidence>
<evidence type="ECO:0007744" key="13">
    <source>
        <dbReference type="PDB" id="4EP5"/>
    </source>
</evidence>
<evidence type="ECO:0007744" key="14">
    <source>
        <dbReference type="PDB" id="4LD0"/>
    </source>
</evidence>
<evidence type="ECO:0007744" key="15">
    <source>
        <dbReference type="PDB" id="6S16"/>
    </source>
</evidence>
<evidence type="ECO:0007829" key="16">
    <source>
        <dbReference type="PDB" id="4EP4"/>
    </source>
</evidence>
<evidence type="ECO:0007829" key="17">
    <source>
        <dbReference type="PDB" id="4EP5"/>
    </source>
</evidence>
<evidence type="ECO:0007829" key="18">
    <source>
        <dbReference type="PDB" id="6S16"/>
    </source>
</evidence>
<feature type="chain" id="PRO_0000225184" description="Crossover junction endodeoxyribonuclease RuvC">
    <location>
        <begin position="1"/>
        <end position="166"/>
    </location>
</feature>
<feature type="short sequence motif" description="Wedge" evidence="4">
    <location>
        <begin position="74"/>
        <end position="76"/>
    </location>
</feature>
<feature type="active site" evidence="1 6 7 8">
    <location>
        <position position="7"/>
    </location>
</feature>
<feature type="active site" evidence="1 6 7 8">
    <location>
        <position position="70"/>
    </location>
</feature>
<feature type="active site" evidence="1 6 7 8">
    <location>
        <position position="143"/>
    </location>
</feature>
<feature type="active site" evidence="6">
    <location>
        <position position="146"/>
    </location>
</feature>
<feature type="binding site" evidence="1 2 9">
    <location>
        <position position="7"/>
    </location>
    <ligand>
        <name>Mg(2+)</name>
        <dbReference type="ChEBI" id="CHEBI:18420"/>
        <label>1</label>
    </ligand>
</feature>
<feature type="binding site" evidence="3 4 10 11">
    <location>
        <begin position="10"/>
        <end position="11"/>
    </location>
    <ligand>
        <name>DNA</name>
        <dbReference type="ChEBI" id="CHEBI:16991"/>
    </ligand>
</feature>
<feature type="binding site" evidence="3 4 10 11">
    <location>
        <position position="40"/>
    </location>
    <ligand>
        <name>DNA</name>
        <dbReference type="ChEBI" id="CHEBI:16991"/>
    </ligand>
</feature>
<feature type="binding site" evidence="3 4 10 11">
    <location>
        <position position="47"/>
    </location>
    <ligand>
        <name>DNA</name>
        <dbReference type="ChEBI" id="CHEBI:16991"/>
    </ligand>
</feature>
<feature type="binding site" evidence="1">
    <location>
        <position position="70"/>
    </location>
    <ligand>
        <name>Mg(2+)</name>
        <dbReference type="ChEBI" id="CHEBI:18420"/>
        <label>2</label>
    </ligand>
</feature>
<feature type="binding site" evidence="3 4 6 10">
    <location>
        <begin position="73"/>
        <end position="74"/>
    </location>
    <ligand>
        <name>DNA</name>
        <dbReference type="ChEBI" id="CHEBI:16991"/>
    </ligand>
</feature>
<feature type="binding site" evidence="3 4 10">
    <location>
        <begin position="76"/>
        <end position="77"/>
    </location>
    <ligand>
        <name>DNA</name>
        <dbReference type="ChEBI" id="CHEBI:16991"/>
    </ligand>
</feature>
<feature type="binding site" evidence="4 7 11">
    <location>
        <position position="80"/>
    </location>
    <ligand>
        <name>DNA</name>
        <dbReference type="ChEBI" id="CHEBI:16991"/>
    </ligand>
</feature>
<feature type="binding site" evidence="3 4 10 11">
    <location>
        <position position="83"/>
    </location>
    <ligand>
        <name>DNA</name>
        <dbReference type="ChEBI" id="CHEBI:16991"/>
    </ligand>
</feature>
<feature type="binding site" evidence="3 10">
    <location>
        <position position="108"/>
    </location>
    <ligand>
        <name>DNA</name>
        <dbReference type="ChEBI" id="CHEBI:16991"/>
    </ligand>
</feature>
<feature type="binding site" evidence="3 10">
    <location>
        <position position="140"/>
    </location>
    <ligand>
        <name>DNA</name>
        <dbReference type="ChEBI" id="CHEBI:16991"/>
    </ligand>
</feature>
<feature type="binding site" evidence="1 2 9">
    <location>
        <position position="143"/>
    </location>
    <ligand>
        <name>Mg(2+)</name>
        <dbReference type="ChEBI" id="CHEBI:18420"/>
        <label>1</label>
    </ligand>
</feature>
<feature type="mutagenesis site" description="Loss of HJ resolution." evidence="3">
    <original>E</original>
    <variation>Q</variation>
    <location>
        <position position="70"/>
    </location>
</feature>
<feature type="mutagenesis site" description="About 50% HJ resolution activity." evidence="2">
    <original>F</original>
    <variation>A</variation>
    <location>
        <position position="73"/>
    </location>
</feature>
<feature type="mutagenesis site" description="Slightly reduced HJ resolution activity, altered sequence specificity." evidence="2">
    <original>F</original>
    <variation>A</variation>
    <location>
        <position position="74"/>
    </location>
</feature>
<feature type="mutagenesis site" description="Improved HJ resolution." evidence="2 3">
    <original>Y</original>
    <variation>A</variation>
    <location>
        <position position="75"/>
    </location>
</feature>
<feature type="mutagenesis site" description="Reduced HJ resolution." evidence="3 4">
    <original>R</original>
    <variation>A</variation>
    <location>
        <position position="76"/>
    </location>
</feature>
<feature type="mutagenesis site" description="About wild-type HJ resolution." evidence="3">
    <original>H</original>
    <variation>A</variation>
    <location>
        <position position="143"/>
    </location>
</feature>
<feature type="mutagenesis site" description="Improved HJ resolution." evidence="3">
    <original>H</original>
    <variation>D</variation>
    <location>
        <position position="143"/>
    </location>
</feature>
<feature type="mutagenesis site" description="Loss of HJ resolution." evidence="2">
    <original>D</original>
    <variation>N</variation>
    <location>
        <position position="146"/>
    </location>
</feature>
<feature type="strand" evidence="16">
    <location>
        <begin position="2"/>
        <end position="7"/>
    </location>
</feature>
<feature type="strand" evidence="16">
    <location>
        <begin position="10"/>
        <end position="20"/>
    </location>
</feature>
<feature type="strand" evidence="16">
    <location>
        <begin position="22"/>
        <end position="26"/>
    </location>
</feature>
<feature type="strand" evidence="16">
    <location>
        <begin position="28"/>
        <end position="37"/>
    </location>
</feature>
<feature type="strand" evidence="17">
    <location>
        <begin position="40"/>
        <end position="42"/>
    </location>
</feature>
<feature type="helix" evidence="16">
    <location>
        <begin position="44"/>
        <end position="62"/>
    </location>
</feature>
<feature type="strand" evidence="16">
    <location>
        <begin position="65"/>
        <end position="70"/>
    </location>
</feature>
<feature type="helix" evidence="16">
    <location>
        <begin position="79"/>
        <end position="98"/>
    </location>
</feature>
<feature type="strand" evidence="16">
    <location>
        <begin position="102"/>
        <end position="105"/>
    </location>
</feature>
<feature type="helix" evidence="16">
    <location>
        <begin position="107"/>
        <end position="115"/>
    </location>
</feature>
<feature type="strand" evidence="18">
    <location>
        <begin position="117"/>
        <end position="119"/>
    </location>
</feature>
<feature type="helix" evidence="16">
    <location>
        <begin position="122"/>
        <end position="132"/>
    </location>
</feature>
<feature type="helix" evidence="16">
    <location>
        <begin position="142"/>
        <end position="159"/>
    </location>
</feature>
<comment type="function">
    <text evidence="1 2 3 4">The RuvA-RuvB-RuvC complex processes Holliday junction (HJ) DNA during genetic recombination and DNA repair (Probable). Endonuclease that resolves Holliday junction (HJ) intermediates. Cleaves cruciform DNA by making single-stranded nicks across the HJ at symmetrical positions within the homologous arms, yielding a 5'-phosphate and a 3'-hydroxyl group; requires a central core of homology in the junction. The cleavage reactions can be uncoupled; the presence of a 5'-phosphate in a half-cut site is required for second strand cleavage (PubMed:23118486, PubMed:23980027, PubMed:31506434). The consensus cleavage sequence is 5'-(A/T)TT(C/G)-3'. Cleavage occurs on the 3'-side of the TT dinucleotide at the point of strand exchange (PubMed:31506434).</text>
</comment>
<comment type="catalytic activity">
    <reaction evidence="1 2 3 4">
        <text>Endonucleolytic cleavage at a junction such as a reciprocal single-stranded crossover between two homologous DNA duplexes (Holliday junction).</text>
        <dbReference type="EC" id="3.1.21.10"/>
    </reaction>
</comment>
<comment type="cofactor">
    <cofactor evidence="1 2">
        <name>Mg(2+)</name>
        <dbReference type="ChEBI" id="CHEBI:18420"/>
    </cofactor>
    <text evidence="1 6 8">Binds 2 Mg(2+) ion per subunit.</text>
</comment>
<comment type="biophysicochemical properties">
    <temperatureDependence>
        <text evidence="2">Optimum temperature is 58 degrees Celsius.</text>
    </temperatureDependence>
</comment>
<comment type="subunit">
    <text evidence="1 2 3">Homodimer which binds Holliday junction (HJ) DNA. The HJ becomes 2-fold symmetrical on binding to RuvC with unstacked arms; it has a different conformation from HJ DNA in complex with RuvA. In the full resolvosome a probable DNA-RuvA(4)-RuvB(12)-RuvC(2) complex forms which resolves the HJ.</text>
</comment>
<comment type="subcellular location">
    <subcellularLocation>
        <location evidence="1">Cytoplasm</location>
    </subcellularLocation>
</comment>
<comment type="domain">
    <text evidence="4">The wedge motif stacks with DNA close to the Holliday junction point; Arg-76 interacts with and eventually disrupts the T:A base pair cleavage site, and subsequent to cleavage may prevent their reannealment.</text>
</comment>
<comment type="similarity">
    <text evidence="1">Belongs to the RuvC family.</text>
</comment>